<feature type="signal peptide" evidence="2">
    <location>
        <begin position="1"/>
        <end position="37"/>
    </location>
</feature>
<feature type="chain" id="PRO_0000000223" description="Diacylglycerol acyltransferase/mycolyltransferase Ag85C">
    <location>
        <begin position="38"/>
        <end position="352"/>
    </location>
</feature>
<feature type="region of interest" description="Fibronectin-binding">
    <location>
        <begin position="102"/>
        <end position="112"/>
    </location>
</feature>
<feature type="region of interest" description="Disordered" evidence="3">
    <location>
        <begin position="332"/>
        <end position="352"/>
    </location>
</feature>
<feature type="compositionally biased region" description="Low complexity" evidence="3">
    <location>
        <begin position="333"/>
        <end position="352"/>
    </location>
</feature>
<feature type="active site" description="Nucleophile" evidence="1">
    <location>
        <position position="170"/>
    </location>
</feature>
<feature type="active site" evidence="1">
    <location>
        <position position="274"/>
    </location>
</feature>
<feature type="active site" evidence="1">
    <location>
        <position position="306"/>
    </location>
</feature>
<feature type="binding site" evidence="1">
    <location>
        <begin position="86"/>
        <end position="87"/>
    </location>
    <ligand>
        <name>substrate</name>
    </ligand>
</feature>
<feature type="binding site" evidence="1">
    <location>
        <position position="170"/>
    </location>
    <ligand>
        <name>substrate</name>
    </ligand>
</feature>
<feature type="binding site" evidence="1">
    <location>
        <position position="198"/>
    </location>
    <ligand>
        <name>substrate</name>
    </ligand>
</feature>
<feature type="binding site" evidence="1">
    <location>
        <begin position="276"/>
        <end position="279"/>
    </location>
    <ligand>
        <name>substrate</name>
    </ligand>
</feature>
<feature type="binding site" evidence="1">
    <location>
        <begin position="306"/>
        <end position="308"/>
    </location>
    <ligand>
        <name>substrate</name>
    </ligand>
</feature>
<reference key="1">
    <citation type="journal article" date="1997" name="Infect. Immun.">
        <title>Analysis of the genes encoding the antigen 85 complex and MPT51 from Mycobacterium avium.</title>
        <authorList>
            <person name="Ohara N."/>
            <person name="Ohara-Wada N."/>
            <person name="Kitaura H."/>
            <person name="Nishiyama T."/>
            <person name="Matsumoto S."/>
            <person name="Yamada T."/>
        </authorList>
    </citation>
    <scope>NUCLEOTIDE SEQUENCE [GENOMIC DNA]</scope>
    <source>
        <strain>ATCC 15769 / DSM 44157 / 1982</strain>
    </source>
</reference>
<evidence type="ECO:0000250" key="1"/>
<evidence type="ECO:0000255" key="2"/>
<evidence type="ECO:0000256" key="3">
    <source>
        <dbReference type="SAM" id="MobiDB-lite"/>
    </source>
</evidence>
<evidence type="ECO:0000305" key="4"/>
<accession>O52972</accession>
<gene>
    <name type="primary">fbpC</name>
</gene>
<proteinExistence type="inferred from homology"/>
<name>A85C_MYCAV</name>
<keyword id="KW-0012">Acyltransferase</keyword>
<keyword id="KW-0964">Secreted</keyword>
<keyword id="KW-0732">Signal</keyword>
<keyword id="KW-0808">Transferase</keyword>
<protein>
    <recommendedName>
        <fullName>Diacylglycerol acyltransferase/mycolyltransferase Ag85C</fullName>
        <shortName>DGAT</shortName>
        <ecNumber>2.3.1.122</ecNumber>
        <ecNumber>2.3.1.20</ecNumber>
    </recommendedName>
    <alternativeName>
        <fullName>Acyl-CoA:diacylglycerol acyltransferase</fullName>
    </alternativeName>
    <alternativeName>
        <fullName>Antigen 85 complex C</fullName>
        <shortName>85C</shortName>
        <shortName>Ag85C</shortName>
    </alternativeName>
    <alternativeName>
        <fullName>Fibronectin-binding protein C</fullName>
        <shortName>Fbps C</shortName>
    </alternativeName>
</protein>
<sequence length="352" mass="37756">MSFIEKVRKLRGAAATMPRRLAIAAVGASLLSGVAVAAGGSPVAGAFSKPGLPVEYLEVPSPSMGRNIKVQFQGGGPHAVYLLDGLRAQDDYNGWDINTPAFEEFYQSGLSVIMPVGGQSSFYSNWYQPSSGNGQNYTYKWETFLTQEMPLWMQSNKQVSPAGNAAVGLSMSGGSALILAAYYPQQFPYAASLSGFLNPSEGWWPTLIGLAMNDSGGYNANSMWGPSTDPAWKRNDPMVQIPRLVANNTRIWVYCGNGTPSDLGGDNVPAKFLEGLTLRTNEQFQNNYAAAGGRNGVFNFPANGTHSWPYWNQQLMAMKPDMQQVLLSGNTTAAPAQPAQPAQPAQPAQPAT</sequence>
<dbReference type="EC" id="2.3.1.122"/>
<dbReference type="EC" id="2.3.1.20"/>
<dbReference type="EMBL" id="D87323">
    <property type="protein sequence ID" value="BAA24161.1"/>
    <property type="molecule type" value="Genomic_DNA"/>
</dbReference>
<dbReference type="RefSeq" id="WP_009979822.1">
    <property type="nucleotide sequence ID" value="NZ_CP016396.1"/>
</dbReference>
<dbReference type="SMR" id="O52972"/>
<dbReference type="ESTHER" id="mycav-a85c">
    <property type="family name" value="A85-Mycolyl-transferase"/>
</dbReference>
<dbReference type="OrthoDB" id="4366784at2"/>
<dbReference type="GO" id="GO:0005576">
    <property type="term" value="C:extracellular region"/>
    <property type="evidence" value="ECO:0007669"/>
    <property type="project" value="UniProtKB-SubCell"/>
</dbReference>
<dbReference type="GO" id="GO:0004144">
    <property type="term" value="F:diacylglycerol O-acyltransferase activity"/>
    <property type="evidence" value="ECO:0007669"/>
    <property type="project" value="UniProtKB-EC"/>
</dbReference>
<dbReference type="GO" id="GO:0050348">
    <property type="term" value="F:trehalose O-mycolyltransferase activity"/>
    <property type="evidence" value="ECO:0007669"/>
    <property type="project" value="UniProtKB-EC"/>
</dbReference>
<dbReference type="FunFam" id="3.40.50.1820:FF:000086">
    <property type="entry name" value="Diacylglycerol acyltransferase/mycolyltransferase Ag85C"/>
    <property type="match status" value="1"/>
</dbReference>
<dbReference type="Gene3D" id="3.40.50.1820">
    <property type="entry name" value="alpha/beta hydrolase"/>
    <property type="match status" value="1"/>
</dbReference>
<dbReference type="InterPro" id="IPR029058">
    <property type="entry name" value="AB_hydrolase_fold"/>
</dbReference>
<dbReference type="InterPro" id="IPR000801">
    <property type="entry name" value="Esterase-like"/>
</dbReference>
<dbReference type="InterPro" id="IPR050583">
    <property type="entry name" value="Mycobacterial_A85_antigen"/>
</dbReference>
<dbReference type="PANTHER" id="PTHR48098:SF1">
    <property type="entry name" value="DIACYLGLYCEROL ACYLTRANSFERASE_MYCOLYLTRANSFERASE AG85A"/>
    <property type="match status" value="1"/>
</dbReference>
<dbReference type="PANTHER" id="PTHR48098">
    <property type="entry name" value="ENTEROCHELIN ESTERASE-RELATED"/>
    <property type="match status" value="1"/>
</dbReference>
<dbReference type="Pfam" id="PF00756">
    <property type="entry name" value="Esterase"/>
    <property type="match status" value="1"/>
</dbReference>
<dbReference type="SUPFAM" id="SSF53474">
    <property type="entry name" value="alpha/beta-Hydrolases"/>
    <property type="match status" value="1"/>
</dbReference>
<comment type="function">
    <text evidence="1">The antigen 85 proteins (FbpA, FbpB, FbpC) are responsible for the high affinity of mycobacteria to fibronectin, a large adhesive glycoprotein, which facilitates the attachment of M.tuberculosis to murine alveolar macrophages (AMs). They also help to maintain the integrity of the cell wall by catalyzing the transfer of mycolic acids to cell wall arabinogalactan and through the synthesis of alpha,alpha-trehalose dimycolate (TDM, cord factor). They catalyze the transfer of a mycoloyl residue from one molecule of alpha,alpha-trehalose monomycolate (TMM) to another TMM, leading to the formation of TDM (By similarity).</text>
</comment>
<comment type="catalytic activity">
    <reaction>
        <text>an acyl-CoA + a 1,2-diacyl-sn-glycerol = a triacyl-sn-glycerol + CoA</text>
        <dbReference type="Rhea" id="RHEA:10868"/>
        <dbReference type="ChEBI" id="CHEBI:17815"/>
        <dbReference type="ChEBI" id="CHEBI:57287"/>
        <dbReference type="ChEBI" id="CHEBI:58342"/>
        <dbReference type="ChEBI" id="CHEBI:64615"/>
        <dbReference type="EC" id="2.3.1.20"/>
    </reaction>
</comment>
<comment type="catalytic activity">
    <reaction>
        <text>2 alpha,alpha'-trehalose 6-mycolate = alpha,alpha'-trehalose 6,6'-bismycolate + alpha,alpha-trehalose</text>
        <dbReference type="Rhea" id="RHEA:23472"/>
        <dbReference type="ChEBI" id="CHEBI:16551"/>
        <dbReference type="ChEBI" id="CHEBI:18195"/>
        <dbReference type="ChEBI" id="CHEBI:18234"/>
        <dbReference type="EC" id="2.3.1.122"/>
    </reaction>
</comment>
<comment type="subunit">
    <text evidence="1">Homodimer.</text>
</comment>
<comment type="subcellular location">
    <subcellularLocation>
        <location evidence="1">Secreted</location>
    </subcellularLocation>
</comment>
<comment type="similarity">
    <text evidence="4">Belongs to the mycobacterial A85 antigen family.</text>
</comment>
<organism>
    <name type="scientific">Mycobacterium avium</name>
    <dbReference type="NCBI Taxonomy" id="1764"/>
    <lineage>
        <taxon>Bacteria</taxon>
        <taxon>Bacillati</taxon>
        <taxon>Actinomycetota</taxon>
        <taxon>Actinomycetes</taxon>
        <taxon>Mycobacteriales</taxon>
        <taxon>Mycobacteriaceae</taxon>
        <taxon>Mycobacterium</taxon>
        <taxon>Mycobacterium avium complex (MAC)</taxon>
    </lineage>
</organism>